<dbReference type="EC" id="1.14.11.80" evidence="2 3"/>
<dbReference type="EMBL" id="GG739552">
    <property type="protein sequence ID" value="EFC35221.1"/>
    <property type="molecule type" value="Genomic_DNA"/>
</dbReference>
<dbReference type="PDB" id="4LT5">
    <property type="method" value="X-ray"/>
    <property type="resolution" value="2.89 A"/>
    <property type="chains" value="A=2-321"/>
</dbReference>
<dbReference type="PDB" id="5CG8">
    <property type="method" value="X-ray"/>
    <property type="resolution" value="2.70 A"/>
    <property type="chains" value="A=57-321"/>
</dbReference>
<dbReference type="PDB" id="5CG9">
    <property type="method" value="X-ray"/>
    <property type="resolution" value="2.69 A"/>
    <property type="chains" value="A/D=57-321"/>
</dbReference>
<dbReference type="PDBsum" id="4LT5"/>
<dbReference type="PDBsum" id="5CG8"/>
<dbReference type="PDBsum" id="5CG9"/>
<dbReference type="SMR" id="D2W6T1"/>
<dbReference type="EnsemblProtists" id="EFC35221">
    <property type="protein sequence ID" value="EFC35221"/>
    <property type="gene ID" value="NAEGRDRAFT_55029"/>
</dbReference>
<dbReference type="VEuPathDB" id="AmoebaDB:NAEGRDRAFT_55029"/>
<dbReference type="InParanoid" id="D2W6T1"/>
<dbReference type="OrthoDB" id="2749837at2759"/>
<dbReference type="EvolutionaryTrace" id="D2W6T1"/>
<dbReference type="Proteomes" id="UP000006671">
    <property type="component" value="Unassembled WGS sequence"/>
</dbReference>
<dbReference type="GO" id="GO:0070579">
    <property type="term" value="F:5-methylcytosine dioxygenase activity"/>
    <property type="evidence" value="ECO:0000314"/>
    <property type="project" value="UniProtKB"/>
</dbReference>
<dbReference type="GO" id="GO:0010385">
    <property type="term" value="F:double-stranded methylated DNA binding"/>
    <property type="evidence" value="ECO:0000314"/>
    <property type="project" value="UniProtKB"/>
</dbReference>
<dbReference type="GO" id="GO:0005506">
    <property type="term" value="F:iron ion binding"/>
    <property type="evidence" value="ECO:0000314"/>
    <property type="project" value="UniProtKB"/>
</dbReference>
<dbReference type="CDD" id="cd18893">
    <property type="entry name" value="TET-like"/>
    <property type="match status" value="1"/>
</dbReference>
<dbReference type="Gene3D" id="3.60.130.30">
    <property type="match status" value="1"/>
</dbReference>
<evidence type="ECO:0000255" key="1">
    <source>
        <dbReference type="PROSITE-ProRule" id="PRU00805"/>
    </source>
</evidence>
<evidence type="ECO:0000269" key="2">
    <source>
    </source>
</evidence>
<evidence type="ECO:0000269" key="3">
    <source>
    </source>
</evidence>
<evidence type="ECO:0000303" key="4">
    <source>
    </source>
</evidence>
<evidence type="ECO:0000305" key="5">
    <source>
    </source>
</evidence>
<evidence type="ECO:0000305" key="6">
    <source>
    </source>
</evidence>
<evidence type="ECO:0000312" key="7">
    <source>
        <dbReference type="EMBL" id="EFC35221.1"/>
    </source>
</evidence>
<evidence type="ECO:0000312" key="8">
    <source>
        <dbReference type="Proteomes" id="UP000006671"/>
    </source>
</evidence>
<evidence type="ECO:0007744" key="9">
    <source>
        <dbReference type="PDB" id="4LT5"/>
    </source>
</evidence>
<evidence type="ECO:0007744" key="10">
    <source>
        <dbReference type="PDB" id="5CG8"/>
    </source>
</evidence>
<evidence type="ECO:0007744" key="11">
    <source>
        <dbReference type="PDB" id="5CG9"/>
    </source>
</evidence>
<evidence type="ECO:0007829" key="12">
    <source>
        <dbReference type="PDB" id="5CG8"/>
    </source>
</evidence>
<evidence type="ECO:0007829" key="13">
    <source>
        <dbReference type="PDB" id="5CG9"/>
    </source>
</evidence>
<gene>
    <name evidence="4" type="primary">TET1</name>
    <name evidence="7" type="ORF">NAEGRDRAFT_55029</name>
</gene>
<keyword id="KW-0002">3D-structure</keyword>
<keyword id="KW-0223">Dioxygenase</keyword>
<keyword id="KW-0238">DNA-binding</keyword>
<keyword id="KW-0408">Iron</keyword>
<keyword id="KW-0479">Metal-binding</keyword>
<keyword id="KW-0560">Oxidoreductase</keyword>
<keyword id="KW-1185">Reference proteome</keyword>
<sequence>MTTFKQQTIKEKETKRKYCIKGTTANLTQTHPNGPVCVNRGEEVANTTTLLDSGGGINKKSLLQNLLSKCKTTFQQSFTNANITLKDEKWLKNVRTAYFVCDHDGSVELAYLPNVLPKELVEEFTEKFESIQTGRKKDTGYSGILDNSMPFNYVTADLSQELGQYLSEIVNPQINYYISKLLTCVSSRTINYLVSLNDSYYALNNCLYPSTAFNSLKPSNDGHRIRKPHKDNLDITPSSLFYFGNFQNTEGYLELTDKNCKVFVQPGDVLFFKGNEYKHVVANITSGWRIGLVYFAHKGSKTKPYYEDTQKNSLKIHKETK</sequence>
<accession>D2W6T1</accession>
<protein>
    <recommendedName>
        <fullName evidence="4">Tet-like dioxygenase 1</fullName>
        <ecNumber evidence="2 3">1.14.11.80</ecNumber>
    </recommendedName>
    <alternativeName>
        <fullName evidence="4">NgTet1</fullName>
    </alternativeName>
</protein>
<reference evidence="7 8" key="1">
    <citation type="journal article" date="2010" name="Cell">
        <title>The genome of Naegleria gruberi illuminates early eukaryotic versatility.</title>
        <authorList>
            <person name="Fritz-Laylin L.K."/>
            <person name="Prochnik S.E."/>
            <person name="Ginger M.L."/>
            <person name="Dacks J.B."/>
            <person name="Carpenter M.L."/>
            <person name="Field M.C."/>
            <person name="Kuo A."/>
            <person name="Paredez A."/>
            <person name="Chapman J."/>
            <person name="Pham J."/>
            <person name="Shu S."/>
            <person name="Neupane R."/>
            <person name="Cipriano M."/>
            <person name="Mancuso J."/>
            <person name="Tu H."/>
            <person name="Salamov A."/>
            <person name="Lindquist E."/>
            <person name="Shapiro H."/>
            <person name="Lucas S."/>
            <person name="Grigoriev I.V."/>
            <person name="Cande W.Z."/>
            <person name="Fulton C."/>
            <person name="Rokhsar D.S."/>
            <person name="Dawson S.C."/>
        </authorList>
    </citation>
    <scope>NUCLEOTIDE SEQUENCE [LARGE SCALE GENOMIC DNA]</scope>
    <source>
        <strain>ATCC 30224 / NEG-M</strain>
    </source>
</reference>
<reference evidence="9" key="2">
    <citation type="journal article" date="2014" name="Nature">
        <title>Structure of a Naegleria Tet-like dioxygenase in complex with 5-methylcytosine DNA.</title>
        <authorList>
            <person name="Hashimoto H."/>
            <person name="Pais J.E."/>
            <person name="Zhang X."/>
            <person name="Saleh L."/>
            <person name="Fu Z.Q."/>
            <person name="Dai N."/>
            <person name="Correa I.R."/>
            <person name="Zheng Y."/>
            <person name="Cheng X."/>
        </authorList>
    </citation>
    <scope>X-RAY CRYSTALLOGRAPHY (2.89 ANGSTROMS) IN COMPLEX WITH MANGANESE; SUBSTRATE ANALOG N-OXALYLGLYCINE AND 5-METHYLCYTOSINE DNA</scope>
    <scope>FUNCTION</scope>
    <scope>CATALYTIC ACTIVITY</scope>
    <scope>COFACTOR</scope>
    <scope>MUTAGENESIS OF ASN-147; ASP-234; HIS-297 AND GLN-310</scope>
</reference>
<reference evidence="10 11" key="3">
    <citation type="journal article" date="2015" name="Nucleic Acids Res.">
        <title>Structure of Naegleria Tet-like dioxygenase (NgTet1) in complexes with a reaction intermediate 5-hydroxymethylcytosine DNA.</title>
        <authorList>
            <person name="Hashimoto H."/>
            <person name="Pais J.E."/>
            <person name="Dai N."/>
            <person name="Correa I.R."/>
            <person name="Zhang X."/>
            <person name="Zheng Y."/>
            <person name="Cheng X."/>
        </authorList>
    </citation>
    <scope>X-RAY CRYSTALLOGRAPHY (2.69 ANGSTROMS) OF 57-321 IN COMPLEX WITH MANGANESE; 2-OXOGLUTARATE AND 5-METHYLCYTOSINE DNA</scope>
    <scope>CATALYTIC ACTIVITY</scope>
    <scope>FUNCTION</scope>
    <scope>COFACTOR</scope>
    <scope>MUTAGENESIS OF ALA-212</scope>
</reference>
<feature type="chain" id="PRO_0000444157" description="Tet-like dioxygenase 1">
    <location>
        <begin position="1"/>
        <end position="321"/>
    </location>
</feature>
<feature type="domain" description="Fe2OG dioxygenase" evidence="1">
    <location>
        <begin position="198"/>
        <end position="298"/>
    </location>
</feature>
<feature type="binding site" evidence="2 3 9 10 11">
    <location>
        <position position="214"/>
    </location>
    <ligand>
        <name>2-oxoglutarate</name>
        <dbReference type="ChEBI" id="CHEBI:16810"/>
    </ligand>
</feature>
<feature type="binding site" evidence="2 3 9 10 11">
    <location>
        <position position="224"/>
    </location>
    <ligand>
        <name>2-oxoglutarate</name>
        <dbReference type="ChEBI" id="CHEBI:16810"/>
    </ligand>
</feature>
<feature type="binding site" evidence="1 5 6">
    <location>
        <position position="229"/>
    </location>
    <ligand>
        <name>Fe cation</name>
        <dbReference type="ChEBI" id="CHEBI:24875"/>
        <note>catalytic</note>
    </ligand>
</feature>
<feature type="binding site" evidence="1 5 6">
    <location>
        <position position="231"/>
    </location>
    <ligand>
        <name>Fe cation</name>
        <dbReference type="ChEBI" id="CHEBI:24875"/>
        <note>catalytic</note>
    </ligand>
</feature>
<feature type="binding site" evidence="2 3 9 10 11">
    <location>
        <position position="242"/>
    </location>
    <ligand>
        <name>2-oxoglutarate</name>
        <dbReference type="ChEBI" id="CHEBI:16810"/>
    </ligand>
</feature>
<feature type="binding site" evidence="1 5 6">
    <location>
        <position position="279"/>
    </location>
    <ligand>
        <name>Fe cation</name>
        <dbReference type="ChEBI" id="CHEBI:24875"/>
        <note>catalytic</note>
    </ligand>
</feature>
<feature type="binding site" evidence="1 2 3 9 10 11">
    <location>
        <position position="289"/>
    </location>
    <ligand>
        <name>2-oxoglutarate</name>
        <dbReference type="ChEBI" id="CHEBI:16810"/>
    </ligand>
</feature>
<feature type="binding site" evidence="2 3">
    <location>
        <position position="310"/>
    </location>
    <ligand>
        <name>substrate</name>
    </ligand>
</feature>
<feature type="site" description="Interaction with DNA" evidence="2 3">
    <location>
        <position position="148"/>
    </location>
</feature>
<feature type="mutagenesis site" description="Reduced enzyme activity with DNA containing 5-methylcytosine." evidence="2">
    <original>N</original>
    <variation>D</variation>
    <location>
        <position position="147"/>
    </location>
</feature>
<feature type="mutagenesis site" description="Strongly reduced enzyme activity." evidence="3">
    <original>A</original>
    <variation>F</variation>
    <variation>I</variation>
    <variation>L</variation>
    <location>
        <position position="212"/>
    </location>
</feature>
<feature type="mutagenesis site" description="No effect on enzyme activity." evidence="3">
    <original>A</original>
    <variation>G</variation>
    <location>
        <position position="212"/>
    </location>
</feature>
<feature type="mutagenesis site" description="Decreases enzyme activity with DNA containing 5-hydroxymethylcytosine." evidence="3">
    <original>A</original>
    <variation>V</variation>
    <location>
        <position position="212"/>
    </location>
</feature>
<feature type="mutagenesis site" description="Nearly abolishes enzyme activity with DNA containing 5-methylcytosine." evidence="2">
    <original>D</original>
    <variation>A</variation>
    <location>
        <position position="234"/>
    </location>
</feature>
<feature type="mutagenesis site" description="Strongly reduced enzyme activity with DNA containing 5-methylcytosine." evidence="2">
    <original>D</original>
    <variation>N</variation>
    <location>
        <position position="234"/>
    </location>
</feature>
<feature type="mutagenesis site" description="Strongly reduced enzyme activity with DNA containing 5-methylcytosine." evidence="2">
    <original>H</original>
    <variation>N</variation>
    <location>
        <position position="297"/>
    </location>
</feature>
<feature type="mutagenesis site" description="Reduced enzyme activity with DNA containing 5-methylcytosine." evidence="2">
    <original>H</original>
    <variation>Q</variation>
    <location>
        <position position="297"/>
    </location>
</feature>
<feature type="mutagenesis site" description="Reduced enzyme activity with DNA containing 5-methylcytosine." evidence="2">
    <original>Q</original>
    <variation>A</variation>
    <location>
        <position position="310"/>
    </location>
</feature>
<feature type="helix" evidence="13">
    <location>
        <begin position="59"/>
        <end position="74"/>
    </location>
</feature>
<feature type="strand" evidence="13">
    <location>
        <begin position="82"/>
        <end position="85"/>
    </location>
</feature>
<feature type="strand" evidence="13">
    <location>
        <begin position="92"/>
        <end position="94"/>
    </location>
</feature>
<feature type="strand" evidence="13">
    <location>
        <begin position="98"/>
        <end position="101"/>
    </location>
</feature>
<feature type="strand" evidence="13">
    <location>
        <begin position="107"/>
        <end position="112"/>
    </location>
</feature>
<feature type="helix" evidence="13">
    <location>
        <begin position="118"/>
        <end position="133"/>
    </location>
</feature>
<feature type="strand" evidence="13">
    <location>
        <begin position="136"/>
        <end position="145"/>
    </location>
</feature>
<feature type="strand" evidence="13">
    <location>
        <begin position="149"/>
        <end position="154"/>
    </location>
</feature>
<feature type="helix" evidence="13">
    <location>
        <begin position="156"/>
        <end position="158"/>
    </location>
</feature>
<feature type="helix" evidence="13">
    <location>
        <begin position="161"/>
        <end position="168"/>
    </location>
</feature>
<feature type="helix" evidence="13">
    <location>
        <begin position="170"/>
        <end position="184"/>
    </location>
</feature>
<feature type="helix" evidence="13">
    <location>
        <begin position="187"/>
        <end position="193"/>
    </location>
</feature>
<feature type="helix" evidence="13">
    <location>
        <begin position="198"/>
        <end position="204"/>
    </location>
</feature>
<feature type="strand" evidence="13">
    <location>
        <begin position="206"/>
        <end position="216"/>
    </location>
</feature>
<feature type="helix" evidence="13">
    <location>
        <begin position="224"/>
        <end position="226"/>
    </location>
</feature>
<feature type="strand" evidence="13">
    <location>
        <begin position="234"/>
        <end position="236"/>
    </location>
</feature>
<feature type="strand" evidence="13">
    <location>
        <begin position="238"/>
        <end position="245"/>
    </location>
</feature>
<feature type="strand" evidence="13">
    <location>
        <begin position="253"/>
        <end position="255"/>
    </location>
</feature>
<feature type="turn" evidence="13">
    <location>
        <begin position="256"/>
        <end position="259"/>
    </location>
</feature>
<feature type="strand" evidence="13">
    <location>
        <begin position="260"/>
        <end position="262"/>
    </location>
</feature>
<feature type="strand" evidence="13">
    <location>
        <begin position="269"/>
        <end position="272"/>
    </location>
</feature>
<feature type="turn" evidence="13">
    <location>
        <begin position="274"/>
        <end position="276"/>
    </location>
</feature>
<feature type="strand" evidence="13">
    <location>
        <begin position="279"/>
        <end position="281"/>
    </location>
</feature>
<feature type="strand" evidence="13">
    <location>
        <begin position="285"/>
        <end position="295"/>
    </location>
</feature>
<feature type="helix" evidence="13">
    <location>
        <begin position="298"/>
        <end position="302"/>
    </location>
</feature>
<feature type="strand" evidence="12">
    <location>
        <begin position="305"/>
        <end position="309"/>
    </location>
</feature>
<feature type="helix" evidence="13">
    <location>
        <begin position="310"/>
        <end position="320"/>
    </location>
</feature>
<name>TET1_NAEGR</name>
<comment type="function">
    <text evidence="2 3">Dioxygenase that catalyzes the conversion of the modified genomic base 5-methylcytosine (5mC) into 5-hydroxymethylcytosine (5hmC), and thereby plays a role in active DNA demethylation. Also mediates subsequent conversion of 5hmC into 5-formylcytosine (5fC), and conversion of 5fC to 5-carboxylcytosine (5caC).</text>
</comment>
<comment type="catalytic activity">
    <reaction evidence="2 3">
        <text>a 5-methyl-2'-deoxycytidine in DNA + 2-oxoglutarate + O2 = a 5-hydroxymethyl-2'-deoxycytidine in DNA + succinate + CO2</text>
        <dbReference type="Rhea" id="RHEA:52636"/>
        <dbReference type="Rhea" id="RHEA-COMP:11370"/>
        <dbReference type="Rhea" id="RHEA-COMP:13315"/>
        <dbReference type="ChEBI" id="CHEBI:15379"/>
        <dbReference type="ChEBI" id="CHEBI:16526"/>
        <dbReference type="ChEBI" id="CHEBI:16810"/>
        <dbReference type="ChEBI" id="CHEBI:30031"/>
        <dbReference type="ChEBI" id="CHEBI:85454"/>
        <dbReference type="ChEBI" id="CHEBI:136731"/>
        <dbReference type="EC" id="1.14.11.80"/>
    </reaction>
</comment>
<comment type="catalytic activity">
    <reaction evidence="2 3">
        <text>a 5-hydroxymethyl-2'-deoxycytidine in DNA + 2-oxoglutarate + O2 = a 5-formyl-2'-deoxycytidine in DNA + succinate + CO2 + H2O</text>
        <dbReference type="Rhea" id="RHEA:53828"/>
        <dbReference type="Rhea" id="RHEA-COMP:13315"/>
        <dbReference type="Rhea" id="RHEA-COMP:13656"/>
        <dbReference type="ChEBI" id="CHEBI:15377"/>
        <dbReference type="ChEBI" id="CHEBI:15379"/>
        <dbReference type="ChEBI" id="CHEBI:16526"/>
        <dbReference type="ChEBI" id="CHEBI:16810"/>
        <dbReference type="ChEBI" id="CHEBI:30031"/>
        <dbReference type="ChEBI" id="CHEBI:136731"/>
        <dbReference type="ChEBI" id="CHEBI:137731"/>
        <dbReference type="EC" id="1.14.11.80"/>
    </reaction>
</comment>
<comment type="catalytic activity">
    <reaction evidence="2 3">
        <text>a 5-formyl-2'-deoxycytidine in DNA + 2-oxoglutarate + O2 = a 5-carboxyl-2'-deoxycytidine in DNA + succinate + CO2 + H(+)</text>
        <dbReference type="Rhea" id="RHEA:53832"/>
        <dbReference type="Rhea" id="RHEA-COMP:13656"/>
        <dbReference type="Rhea" id="RHEA-COMP:13657"/>
        <dbReference type="ChEBI" id="CHEBI:15378"/>
        <dbReference type="ChEBI" id="CHEBI:15379"/>
        <dbReference type="ChEBI" id="CHEBI:16526"/>
        <dbReference type="ChEBI" id="CHEBI:16810"/>
        <dbReference type="ChEBI" id="CHEBI:30031"/>
        <dbReference type="ChEBI" id="CHEBI:137731"/>
        <dbReference type="ChEBI" id="CHEBI:137732"/>
        <dbReference type="EC" id="1.14.11.80"/>
    </reaction>
</comment>
<comment type="cofactor">
    <cofactor evidence="1 2 3">
        <name>Fe(2+)</name>
        <dbReference type="ChEBI" id="CHEBI:29033"/>
    </cofactor>
    <text evidence="1 2 3">Binds 1 Fe(2+) ion per subunit.</text>
</comment>
<comment type="domain">
    <text evidence="5">Has good structural similarity to 2-oxoglutarate-dependent dioxygenases of the TET and the alkB families, in spite of very low overall sequence similarity.</text>
</comment>
<proteinExistence type="evidence at protein level"/>
<organism evidence="8">
    <name type="scientific">Naegleria gruberi</name>
    <name type="common">Amoeba</name>
    <dbReference type="NCBI Taxonomy" id="5762"/>
    <lineage>
        <taxon>Eukaryota</taxon>
        <taxon>Discoba</taxon>
        <taxon>Heterolobosea</taxon>
        <taxon>Tetramitia</taxon>
        <taxon>Eutetramitia</taxon>
        <taxon>Vahlkampfiidae</taxon>
        <taxon>Naegleria</taxon>
    </lineage>
</organism>